<protein>
    <recommendedName>
        <fullName>Centrosomal protein CEP57L1</fullName>
    </recommendedName>
    <alternativeName>
        <fullName>Centrosomal protein 57kDa-like protein 1</fullName>
    </alternativeName>
    <alternativeName>
        <fullName>Centrosomal protein of 57 kDa-related protein</fullName>
        <shortName>Cep57R</shortName>
    </alternativeName>
    <alternativeName>
        <fullName>Cep57-related protein</fullName>
    </alternativeName>
</protein>
<dbReference type="EMBL" id="BC079256">
    <property type="protein sequence ID" value="AAH79256.1"/>
    <property type="molecule type" value="mRNA"/>
</dbReference>
<dbReference type="RefSeq" id="XP_006256627.1">
    <property type="nucleotide sequence ID" value="XM_006256565.4"/>
</dbReference>
<dbReference type="RefSeq" id="XP_006256628.1">
    <property type="nucleotide sequence ID" value="XM_006256566.5"/>
</dbReference>
<dbReference type="RefSeq" id="XP_006256629.1">
    <property type="nucleotide sequence ID" value="XM_006256567.5"/>
</dbReference>
<dbReference type="RefSeq" id="XP_038954546.1">
    <property type="nucleotide sequence ID" value="XM_039098618.2"/>
</dbReference>
<dbReference type="SMR" id="Q6AXZ4"/>
<dbReference type="FunCoup" id="Q6AXZ4">
    <property type="interactions" value="999"/>
</dbReference>
<dbReference type="PhosphoSitePlus" id="Q6AXZ4"/>
<dbReference type="PaxDb" id="10116-ENSRNOP00000000331"/>
<dbReference type="Ensembl" id="ENSRNOT00000000331.6">
    <property type="protein sequence ID" value="ENSRNOP00000000331.6"/>
    <property type="gene ID" value="ENSRNOG00000000303.8"/>
</dbReference>
<dbReference type="GeneID" id="294519"/>
<dbReference type="AGR" id="RGD:1311358"/>
<dbReference type="CTD" id="285753"/>
<dbReference type="RGD" id="1311358">
    <property type="gene designation" value="Cep57l1"/>
</dbReference>
<dbReference type="eggNOG" id="ENOG502QTVF">
    <property type="taxonomic scope" value="Eukaryota"/>
</dbReference>
<dbReference type="GeneTree" id="ENSGT00530000063695"/>
<dbReference type="HOGENOM" id="CLU_034321_0_0_1"/>
<dbReference type="InParanoid" id="Q6AXZ4"/>
<dbReference type="OrthoDB" id="76453at2759"/>
<dbReference type="PhylomeDB" id="Q6AXZ4"/>
<dbReference type="TreeFam" id="TF329178"/>
<dbReference type="PRO" id="PR:Q6AXZ4"/>
<dbReference type="Proteomes" id="UP000002494">
    <property type="component" value="Chromosome 20"/>
</dbReference>
<dbReference type="GO" id="GO:0005813">
    <property type="term" value="C:centrosome"/>
    <property type="evidence" value="ECO:0000318"/>
    <property type="project" value="GO_Central"/>
</dbReference>
<dbReference type="GO" id="GO:0005737">
    <property type="term" value="C:cytoplasm"/>
    <property type="evidence" value="ECO:0007669"/>
    <property type="project" value="UniProtKB-KW"/>
</dbReference>
<dbReference type="GO" id="GO:0005874">
    <property type="term" value="C:microtubule"/>
    <property type="evidence" value="ECO:0007669"/>
    <property type="project" value="UniProtKB-KW"/>
</dbReference>
<dbReference type="GO" id="GO:0043015">
    <property type="term" value="F:gamma-tubulin binding"/>
    <property type="evidence" value="ECO:0007669"/>
    <property type="project" value="InterPro"/>
</dbReference>
<dbReference type="GO" id="GO:0042802">
    <property type="term" value="F:identical protein binding"/>
    <property type="evidence" value="ECO:0000266"/>
    <property type="project" value="RGD"/>
</dbReference>
<dbReference type="GO" id="GO:0008017">
    <property type="term" value="F:microtubule binding"/>
    <property type="evidence" value="ECO:0000318"/>
    <property type="project" value="GO_Central"/>
</dbReference>
<dbReference type="FunFam" id="1.20.58.90:FF:000005">
    <property type="entry name" value="centrosomal protein CEP57L1 isoform X2"/>
    <property type="match status" value="1"/>
</dbReference>
<dbReference type="Gene3D" id="1.20.58.90">
    <property type="match status" value="1"/>
</dbReference>
<dbReference type="InterPro" id="IPR051756">
    <property type="entry name" value="Centrosomal_MT-associated"/>
</dbReference>
<dbReference type="InterPro" id="IPR025913">
    <property type="entry name" value="Cep57_CLD"/>
</dbReference>
<dbReference type="InterPro" id="IPR024957">
    <property type="entry name" value="Cep57_MT-bd_dom"/>
</dbReference>
<dbReference type="PANTHER" id="PTHR19336:SF10">
    <property type="entry name" value="CENTROSOMAL PROTEIN CEP57L1"/>
    <property type="match status" value="1"/>
</dbReference>
<dbReference type="PANTHER" id="PTHR19336">
    <property type="entry name" value="UNCHARACTERIZED DUF1167"/>
    <property type="match status" value="1"/>
</dbReference>
<dbReference type="Pfam" id="PF14073">
    <property type="entry name" value="Cep57_CLD"/>
    <property type="match status" value="1"/>
</dbReference>
<dbReference type="Pfam" id="PF06657">
    <property type="entry name" value="Cep57_MT_bd"/>
    <property type="match status" value="1"/>
</dbReference>
<proteinExistence type="evidence at transcript level"/>
<feature type="chain" id="PRO_0000189536" description="Centrosomal protein CEP57L1">
    <location>
        <begin position="1"/>
        <end position="430"/>
    </location>
</feature>
<feature type="region of interest" description="Disordered" evidence="4">
    <location>
        <begin position="248"/>
        <end position="290"/>
    </location>
</feature>
<feature type="region of interest" description="Disordered" evidence="4">
    <location>
        <begin position="362"/>
        <end position="430"/>
    </location>
</feature>
<feature type="coiled-coil region" evidence="3">
    <location>
        <begin position="46"/>
        <end position="213"/>
    </location>
</feature>
<feature type="coiled-coil region" evidence="3">
    <location>
        <begin position="290"/>
        <end position="377"/>
    </location>
</feature>
<feature type="compositionally biased region" description="Basic and acidic residues" evidence="4">
    <location>
        <begin position="249"/>
        <end position="272"/>
    </location>
</feature>
<feature type="compositionally biased region" description="Basic and acidic residues" evidence="4">
    <location>
        <begin position="362"/>
        <end position="372"/>
    </location>
</feature>
<feature type="compositionally biased region" description="Basic and acidic residues" evidence="4">
    <location>
        <begin position="421"/>
        <end position="430"/>
    </location>
</feature>
<feature type="modified residue" description="Phosphoserine" evidence="2">
    <location>
        <position position="45"/>
    </location>
</feature>
<name>CE57L_RAT</name>
<evidence type="ECO:0000250" key="1"/>
<evidence type="ECO:0000250" key="2">
    <source>
        <dbReference type="UniProtKB" id="Q8IYX8"/>
    </source>
</evidence>
<evidence type="ECO:0000255" key="3"/>
<evidence type="ECO:0000256" key="4">
    <source>
        <dbReference type="SAM" id="MobiDB-lite"/>
    </source>
</evidence>
<evidence type="ECO:0000305" key="5"/>
<sequence length="430" mass="50274">MDAELPHSMIGSYLNPPERMYLPSFSQTEASQNCHPGSSPKMFNSPNNQALVSALKTLQEKIRRLELERTQAEDNLNLLSREAAQYKKALEEETNERNLAHEELTRQKKDISIQLSSAQSRCILLEKQLEYTKRMVLNVEREKNMILEQQAQLQREKEQDQMKLHAKLEKLDVLEKECLRLTTTQQTAEEKIKYLEEKLKEEEHQRRLFQDRACELQTGLEISKILMSTVSSSKLCNERKKLPKKTNCLKREPPQHTDCRFRGPASERERPPFRMTSSARAEPHSSGEPFSICDNLSELLRTMQDELDQMNMEHRELLRQIAQTGSHSDSEELEQELEHLARKMESKEDQISKLQKHQDRVRKLQEKVENSRINESSGIHGNPKRSKNLKTSPRKCLSETSAFQKDRSFQPVKVHSLPPRLRRDDVKWEQ</sequence>
<accession>Q6AXZ4</accession>
<keyword id="KW-0175">Coiled coil</keyword>
<keyword id="KW-0963">Cytoplasm</keyword>
<keyword id="KW-0206">Cytoskeleton</keyword>
<keyword id="KW-0493">Microtubule</keyword>
<keyword id="KW-0597">Phosphoprotein</keyword>
<keyword id="KW-1185">Reference proteome</keyword>
<comment type="function">
    <text evidence="1">Centrosomal protein which may be required for microtubule attachment to centrosomes.</text>
</comment>
<comment type="subcellular location">
    <subcellularLocation>
        <location evidence="1">Cytoplasm</location>
        <location evidence="1">Cytoskeleton</location>
        <location evidence="1">Microtubule organizing center</location>
        <location evidence="1">Centrosome</location>
    </subcellularLocation>
</comment>
<comment type="similarity">
    <text evidence="5">Belongs to the translokin family.</text>
</comment>
<reference key="1">
    <citation type="journal article" date="2004" name="Genome Res.">
        <title>The status, quality, and expansion of the NIH full-length cDNA project: the Mammalian Gene Collection (MGC).</title>
        <authorList>
            <consortium name="The MGC Project Team"/>
        </authorList>
    </citation>
    <scope>NUCLEOTIDE SEQUENCE [LARGE SCALE MRNA]</scope>
    <source>
        <tissue>Testis</tissue>
    </source>
</reference>
<gene>
    <name type="primary">Cep57l1</name>
    <name type="synonym">Cep57r</name>
</gene>
<organism>
    <name type="scientific">Rattus norvegicus</name>
    <name type="common">Rat</name>
    <dbReference type="NCBI Taxonomy" id="10116"/>
    <lineage>
        <taxon>Eukaryota</taxon>
        <taxon>Metazoa</taxon>
        <taxon>Chordata</taxon>
        <taxon>Craniata</taxon>
        <taxon>Vertebrata</taxon>
        <taxon>Euteleostomi</taxon>
        <taxon>Mammalia</taxon>
        <taxon>Eutheria</taxon>
        <taxon>Euarchontoglires</taxon>
        <taxon>Glires</taxon>
        <taxon>Rodentia</taxon>
        <taxon>Myomorpha</taxon>
        <taxon>Muroidea</taxon>
        <taxon>Muridae</taxon>
        <taxon>Murinae</taxon>
        <taxon>Rattus</taxon>
    </lineage>
</organism>